<proteinExistence type="predicted"/>
<name>YGS6_YEAST</name>
<dbReference type="EMBL" id="X84705">
    <property type="protein sequence ID" value="CAA59177.1"/>
    <property type="molecule type" value="Genomic_DNA"/>
</dbReference>
<dbReference type="EMBL" id="Z72698">
    <property type="protein sequence ID" value="CAA96888.1"/>
    <property type="molecule type" value="Genomic_DNA"/>
</dbReference>
<dbReference type="EMBL" id="BK006941">
    <property type="protein sequence ID" value="DAA07937.1"/>
    <property type="molecule type" value="Genomic_DNA"/>
</dbReference>
<dbReference type="PIR" id="S59235">
    <property type="entry name" value="S59235"/>
</dbReference>
<dbReference type="RefSeq" id="NP_011339.1">
    <property type="nucleotide sequence ID" value="NM_001181041.1"/>
</dbReference>
<dbReference type="BioGRID" id="33077">
    <property type="interactions" value="60"/>
</dbReference>
<dbReference type="FunCoup" id="P46945">
    <property type="interactions" value="15"/>
</dbReference>
<dbReference type="STRING" id="4932.YGL176C"/>
<dbReference type="PaxDb" id="4932-YGL176C"/>
<dbReference type="PeptideAtlas" id="P46945"/>
<dbReference type="EnsemblFungi" id="YGL176C_mRNA">
    <property type="protein sequence ID" value="YGL176C"/>
    <property type="gene ID" value="YGL176C"/>
</dbReference>
<dbReference type="GeneID" id="852699"/>
<dbReference type="KEGG" id="sce:YGL176C"/>
<dbReference type="AGR" id="SGD:S000003144"/>
<dbReference type="SGD" id="S000003144">
    <property type="gene designation" value="YGL176C"/>
</dbReference>
<dbReference type="VEuPathDB" id="FungiDB:YGL176C"/>
<dbReference type="eggNOG" id="ENOG502RS1A">
    <property type="taxonomic scope" value="Eukaryota"/>
</dbReference>
<dbReference type="HOGENOM" id="CLU_585544_0_0_1"/>
<dbReference type="InParanoid" id="P46945"/>
<dbReference type="OMA" id="HRIQIGV"/>
<dbReference type="OrthoDB" id="128867at2759"/>
<dbReference type="BioCyc" id="YEAST:G3O-30664-MONOMER"/>
<dbReference type="BioGRID-ORCS" id="852699">
    <property type="hits" value="0 hits in 10 CRISPR screens"/>
</dbReference>
<dbReference type="PRO" id="PR:P46945"/>
<dbReference type="Proteomes" id="UP000002311">
    <property type="component" value="Chromosome VII"/>
</dbReference>
<dbReference type="RNAct" id="P46945">
    <property type="molecule type" value="protein"/>
</dbReference>
<accession>P46945</accession>
<accession>D6VTX6</accession>
<organism>
    <name type="scientific">Saccharomyces cerevisiae (strain ATCC 204508 / S288c)</name>
    <name type="common">Baker's yeast</name>
    <dbReference type="NCBI Taxonomy" id="559292"/>
    <lineage>
        <taxon>Eukaryota</taxon>
        <taxon>Fungi</taxon>
        <taxon>Dikarya</taxon>
        <taxon>Ascomycota</taxon>
        <taxon>Saccharomycotina</taxon>
        <taxon>Saccharomycetes</taxon>
        <taxon>Saccharomycetales</taxon>
        <taxon>Saccharomycetaceae</taxon>
        <taxon>Saccharomyces</taxon>
    </lineage>
</organism>
<protein>
    <recommendedName>
        <fullName>Uncharacterized protein YGL176C</fullName>
    </recommendedName>
</protein>
<reference key="1">
    <citation type="journal article" date="1995" name="Yeast">
        <title>The sequence of an 11.1 kb fragment on the left arm of Saccharomyces cerevisiae chromosome VII reveals six open reading frames including NSP49, KEM1 and four putative new genes.</title>
        <authorList>
            <person name="Bertani I."/>
            <person name="Coglievina M."/>
            <person name="Zaccaria P."/>
            <person name="Klima R."/>
            <person name="Bruschi C.V."/>
        </authorList>
    </citation>
    <scope>NUCLEOTIDE SEQUENCE [GENOMIC DNA]</scope>
    <source>
        <strain>ATCC 96604 / S288c / FY1679</strain>
    </source>
</reference>
<reference key="2">
    <citation type="journal article" date="1997" name="Nature">
        <title>The nucleotide sequence of Saccharomyces cerevisiae chromosome VII.</title>
        <authorList>
            <person name="Tettelin H."/>
            <person name="Agostoni-Carbone M.L."/>
            <person name="Albermann K."/>
            <person name="Albers M."/>
            <person name="Arroyo J."/>
            <person name="Backes U."/>
            <person name="Barreiros T."/>
            <person name="Bertani I."/>
            <person name="Bjourson A.J."/>
            <person name="Brueckner M."/>
            <person name="Bruschi C.V."/>
            <person name="Carignani G."/>
            <person name="Castagnoli L."/>
            <person name="Cerdan E."/>
            <person name="Clemente M.L."/>
            <person name="Coblenz A."/>
            <person name="Coglievina M."/>
            <person name="Coissac E."/>
            <person name="Defoor E."/>
            <person name="Del Bino S."/>
            <person name="Delius H."/>
            <person name="Delneri D."/>
            <person name="de Wergifosse P."/>
            <person name="Dujon B."/>
            <person name="Durand P."/>
            <person name="Entian K.-D."/>
            <person name="Eraso P."/>
            <person name="Escribano V."/>
            <person name="Fabiani L."/>
            <person name="Fartmann B."/>
            <person name="Feroli F."/>
            <person name="Feuermann M."/>
            <person name="Frontali L."/>
            <person name="Garcia-Gonzalez M."/>
            <person name="Garcia-Saez M.I."/>
            <person name="Goffeau A."/>
            <person name="Guerreiro P."/>
            <person name="Hani J."/>
            <person name="Hansen M."/>
            <person name="Hebling U."/>
            <person name="Hernandez K."/>
            <person name="Heumann K."/>
            <person name="Hilger F."/>
            <person name="Hofmann B."/>
            <person name="Indge K.J."/>
            <person name="James C.M."/>
            <person name="Klima R."/>
            <person name="Koetter P."/>
            <person name="Kramer B."/>
            <person name="Kramer W."/>
            <person name="Lauquin G."/>
            <person name="Leuther H."/>
            <person name="Louis E.J."/>
            <person name="Maillier E."/>
            <person name="Marconi A."/>
            <person name="Martegani E."/>
            <person name="Mazon M.J."/>
            <person name="Mazzoni C."/>
            <person name="McReynolds A.D.K."/>
            <person name="Melchioretto P."/>
            <person name="Mewes H.-W."/>
            <person name="Minenkova O."/>
            <person name="Mueller-Auer S."/>
            <person name="Nawrocki A."/>
            <person name="Netter P."/>
            <person name="Neu R."/>
            <person name="Nombela C."/>
            <person name="Oliver S.G."/>
            <person name="Panzeri L."/>
            <person name="Paoluzi S."/>
            <person name="Plevani P."/>
            <person name="Portetelle D."/>
            <person name="Portillo F."/>
            <person name="Potier S."/>
            <person name="Purnelle B."/>
            <person name="Rieger M."/>
            <person name="Riles L."/>
            <person name="Rinaldi T."/>
            <person name="Robben J."/>
            <person name="Rodrigues-Pousada C."/>
            <person name="Rodriguez-Belmonte E."/>
            <person name="Rodriguez-Torres A.M."/>
            <person name="Rose M."/>
            <person name="Ruzzi M."/>
            <person name="Saliola M."/>
            <person name="Sanchez-Perez M."/>
            <person name="Schaefer B."/>
            <person name="Schaefer M."/>
            <person name="Scharfe M."/>
            <person name="Schmidheini T."/>
            <person name="Schreer A."/>
            <person name="Skala J."/>
            <person name="Souciet J.-L."/>
            <person name="Steensma H.Y."/>
            <person name="Talla E."/>
            <person name="Thierry A."/>
            <person name="Vandenbol M."/>
            <person name="van der Aart Q.J.M."/>
            <person name="Van Dyck L."/>
            <person name="Vanoni M."/>
            <person name="Verhasselt P."/>
            <person name="Voet M."/>
            <person name="Volckaert G."/>
            <person name="Wambutt R."/>
            <person name="Watson M.D."/>
            <person name="Weber N."/>
            <person name="Wedler E."/>
            <person name="Wedler H."/>
            <person name="Wipfli P."/>
            <person name="Wolf K."/>
            <person name="Wright L.F."/>
            <person name="Zaccaria P."/>
            <person name="Zimmermann M."/>
            <person name="Zollner A."/>
            <person name="Kleine K."/>
        </authorList>
    </citation>
    <scope>NUCLEOTIDE SEQUENCE [LARGE SCALE GENOMIC DNA]</scope>
    <source>
        <strain>ATCC 204508 / S288c</strain>
    </source>
</reference>
<reference key="3">
    <citation type="journal article" date="2014" name="G3 (Bethesda)">
        <title>The reference genome sequence of Saccharomyces cerevisiae: Then and now.</title>
        <authorList>
            <person name="Engel S.R."/>
            <person name="Dietrich F.S."/>
            <person name="Fisk D.G."/>
            <person name="Binkley G."/>
            <person name="Balakrishnan R."/>
            <person name="Costanzo M.C."/>
            <person name="Dwight S.S."/>
            <person name="Hitz B.C."/>
            <person name="Karra K."/>
            <person name="Nash R.S."/>
            <person name="Weng S."/>
            <person name="Wong E.D."/>
            <person name="Lloyd P."/>
            <person name="Skrzypek M.S."/>
            <person name="Miyasato S.R."/>
            <person name="Simison M."/>
            <person name="Cherry J.M."/>
        </authorList>
    </citation>
    <scope>GENOME REANNOTATION</scope>
    <source>
        <strain>ATCC 204508 / S288c</strain>
    </source>
</reference>
<keyword id="KW-1185">Reference proteome</keyword>
<feature type="chain" id="PRO_0000202727" description="Uncharacterized protein YGL176C">
    <location>
        <begin position="1"/>
        <end position="554"/>
    </location>
</feature>
<sequence length="554" mass="63276">MTPNLPGFYYDRERRRYFRISENQSISTTGTTNQYRKDNIKRQCVEENYDKKFSMIKKKRQQTLQKYKLSLLNPLERAFRPLSYEKYMIGLNMQYASHSLTEGHHSHSSANVKSLNFPHRIQIGVLANCILLVTQEGCFHSKLVFATNKGYVAGFSSLDNFSEENFFTGFSMAELNPMLKYKSEPTDVFKTMKLERTVAIKEGPSHYFYHNVNTRSNVHTFAIFLQDFSSLKLLKIRQVKLKENCQVHDSLVVGDTLIITVNYRCHFYDLIPETFPNPYIFSPAKSSRKHKSRSDITSLSFCLQEDALSPLKKTNTGVFYLGYRNGDSMAIVFTNITNMTLQYSKTNGMTSESRNQPIRNSLKSVVSIKALNNKGLILISGMADKENVQQLVIADTFLEDILTEIPVVSFKTKFLNVTKDTEILEISDDGRYFIYGSTSARDGKGDFEVFCTTLSGNLDYEKSEGGNITLYPIGGMKNYCRLENFQFESIHLHSAFIPPRYVNPFDAVEPLGEESSTSPYDIPEEALSQKICILIRREDDPYNGANIFITSALT</sequence>
<gene>
    <name type="ordered locus">YGL176C</name>
    <name type="ORF">G1636</name>
</gene>